<sequence>MKIDLNADLGEGCASDAELLTLVSSANIACGFHAGDAQTMQACVREAIKNGVAIGAHPSFPDRENFGRSAMQLPPETVYAQTLYQIGALATIARAQGGVMRHVKPHGMLYNQAAKEAQLADAIARAVYACDPALVLVGLAGSELIRAGKQYGLTTREEVFADRGYQADGSLVPRSQPGALIENEEQALAQTLEMVQHGRVKSITGEWATVTAQTVCLHGDGEHALAFARRLRSTFAEKEIVVAA</sequence>
<accession>B7M5M7</accession>
<feature type="chain" id="PRO_1000132052" description="5-oxoprolinase subunit A">
    <location>
        <begin position="1"/>
        <end position="244"/>
    </location>
</feature>
<comment type="function">
    <text evidence="1">Catalyzes the cleavage of 5-oxoproline to form L-glutamate coupled to the hydrolysis of ATP to ADP and inorganic phosphate.</text>
</comment>
<comment type="catalytic activity">
    <reaction evidence="1">
        <text>5-oxo-L-proline + ATP + 2 H2O = L-glutamate + ADP + phosphate + H(+)</text>
        <dbReference type="Rhea" id="RHEA:10348"/>
        <dbReference type="ChEBI" id="CHEBI:15377"/>
        <dbReference type="ChEBI" id="CHEBI:15378"/>
        <dbReference type="ChEBI" id="CHEBI:29985"/>
        <dbReference type="ChEBI" id="CHEBI:30616"/>
        <dbReference type="ChEBI" id="CHEBI:43474"/>
        <dbReference type="ChEBI" id="CHEBI:58402"/>
        <dbReference type="ChEBI" id="CHEBI:456216"/>
        <dbReference type="EC" id="3.5.2.9"/>
    </reaction>
</comment>
<comment type="subunit">
    <text evidence="1">Forms a complex composed of PxpA, PxpB and PxpC.</text>
</comment>
<comment type="similarity">
    <text evidence="1">Belongs to the LamB/PxpA family.</text>
</comment>
<keyword id="KW-0067">ATP-binding</keyword>
<keyword id="KW-0378">Hydrolase</keyword>
<keyword id="KW-0547">Nucleotide-binding</keyword>
<gene>
    <name evidence="1" type="primary">pxpA</name>
    <name type="ordered locus">ECIAI1_0687</name>
</gene>
<protein>
    <recommendedName>
        <fullName evidence="1">5-oxoprolinase subunit A</fullName>
        <shortName evidence="1">5-OPase subunit A</shortName>
        <ecNumber evidence="1">3.5.2.9</ecNumber>
    </recommendedName>
    <alternativeName>
        <fullName evidence="1">5-oxoprolinase (ATP-hydrolyzing) subunit A</fullName>
    </alternativeName>
</protein>
<proteinExistence type="inferred from homology"/>
<reference key="1">
    <citation type="journal article" date="2009" name="PLoS Genet.">
        <title>Organised genome dynamics in the Escherichia coli species results in highly diverse adaptive paths.</title>
        <authorList>
            <person name="Touchon M."/>
            <person name="Hoede C."/>
            <person name="Tenaillon O."/>
            <person name="Barbe V."/>
            <person name="Baeriswyl S."/>
            <person name="Bidet P."/>
            <person name="Bingen E."/>
            <person name="Bonacorsi S."/>
            <person name="Bouchier C."/>
            <person name="Bouvet O."/>
            <person name="Calteau A."/>
            <person name="Chiapello H."/>
            <person name="Clermont O."/>
            <person name="Cruveiller S."/>
            <person name="Danchin A."/>
            <person name="Diard M."/>
            <person name="Dossat C."/>
            <person name="Karoui M.E."/>
            <person name="Frapy E."/>
            <person name="Garry L."/>
            <person name="Ghigo J.M."/>
            <person name="Gilles A.M."/>
            <person name="Johnson J."/>
            <person name="Le Bouguenec C."/>
            <person name="Lescat M."/>
            <person name="Mangenot S."/>
            <person name="Martinez-Jehanne V."/>
            <person name="Matic I."/>
            <person name="Nassif X."/>
            <person name="Oztas S."/>
            <person name="Petit M.A."/>
            <person name="Pichon C."/>
            <person name="Rouy Z."/>
            <person name="Ruf C.S."/>
            <person name="Schneider D."/>
            <person name="Tourret J."/>
            <person name="Vacherie B."/>
            <person name="Vallenet D."/>
            <person name="Medigue C."/>
            <person name="Rocha E.P.C."/>
            <person name="Denamur E."/>
        </authorList>
    </citation>
    <scope>NUCLEOTIDE SEQUENCE [LARGE SCALE GENOMIC DNA]</scope>
    <source>
        <strain>IAI1</strain>
    </source>
</reference>
<evidence type="ECO:0000255" key="1">
    <source>
        <dbReference type="HAMAP-Rule" id="MF_00691"/>
    </source>
</evidence>
<name>PXPA_ECO8A</name>
<dbReference type="EC" id="3.5.2.9" evidence="1"/>
<dbReference type="EMBL" id="CU928160">
    <property type="protein sequence ID" value="CAQ97555.1"/>
    <property type="molecule type" value="Genomic_DNA"/>
</dbReference>
<dbReference type="RefSeq" id="WP_000687142.1">
    <property type="nucleotide sequence ID" value="NC_011741.1"/>
</dbReference>
<dbReference type="SMR" id="B7M5M7"/>
<dbReference type="GeneID" id="75205545"/>
<dbReference type="KEGG" id="ecr:ECIAI1_0687"/>
<dbReference type="HOGENOM" id="CLU_069535_0_0_6"/>
<dbReference type="GO" id="GO:0017168">
    <property type="term" value="F:5-oxoprolinase (ATP-hydrolyzing) activity"/>
    <property type="evidence" value="ECO:0007669"/>
    <property type="project" value="UniProtKB-UniRule"/>
</dbReference>
<dbReference type="GO" id="GO:0005524">
    <property type="term" value="F:ATP binding"/>
    <property type="evidence" value="ECO:0007669"/>
    <property type="project" value="UniProtKB-UniRule"/>
</dbReference>
<dbReference type="GO" id="GO:0005975">
    <property type="term" value="P:carbohydrate metabolic process"/>
    <property type="evidence" value="ECO:0007669"/>
    <property type="project" value="InterPro"/>
</dbReference>
<dbReference type="CDD" id="cd10800">
    <property type="entry name" value="LamB_YcsF_YbgL_like"/>
    <property type="match status" value="1"/>
</dbReference>
<dbReference type="Gene3D" id="3.20.20.370">
    <property type="entry name" value="Glycoside hydrolase/deacetylase"/>
    <property type="match status" value="1"/>
</dbReference>
<dbReference type="HAMAP" id="MF_00691">
    <property type="entry name" value="PxpA"/>
    <property type="match status" value="1"/>
</dbReference>
<dbReference type="InterPro" id="IPR011330">
    <property type="entry name" value="Glyco_hydro/deAcase_b/a-brl"/>
</dbReference>
<dbReference type="InterPro" id="IPR005501">
    <property type="entry name" value="LamB/YcsF/PxpA-like"/>
</dbReference>
<dbReference type="NCBIfam" id="NF003812">
    <property type="entry name" value="PRK05406.1-1"/>
    <property type="match status" value="1"/>
</dbReference>
<dbReference type="NCBIfam" id="NF003814">
    <property type="entry name" value="PRK05406.1-3"/>
    <property type="match status" value="1"/>
</dbReference>
<dbReference type="NCBIfam" id="NF003815">
    <property type="entry name" value="PRK05406.1-4"/>
    <property type="match status" value="1"/>
</dbReference>
<dbReference type="NCBIfam" id="NF003816">
    <property type="entry name" value="PRK05406.1-5"/>
    <property type="match status" value="1"/>
</dbReference>
<dbReference type="PANTHER" id="PTHR30292:SF0">
    <property type="entry name" value="5-OXOPROLINASE SUBUNIT A"/>
    <property type="match status" value="1"/>
</dbReference>
<dbReference type="PANTHER" id="PTHR30292">
    <property type="entry name" value="UNCHARACTERIZED PROTEIN YBGL-RELATED"/>
    <property type="match status" value="1"/>
</dbReference>
<dbReference type="Pfam" id="PF03746">
    <property type="entry name" value="LamB_YcsF"/>
    <property type="match status" value="1"/>
</dbReference>
<dbReference type="SUPFAM" id="SSF88713">
    <property type="entry name" value="Glycoside hydrolase/deacetylase"/>
    <property type="match status" value="1"/>
</dbReference>
<organism>
    <name type="scientific">Escherichia coli O8 (strain IAI1)</name>
    <dbReference type="NCBI Taxonomy" id="585034"/>
    <lineage>
        <taxon>Bacteria</taxon>
        <taxon>Pseudomonadati</taxon>
        <taxon>Pseudomonadota</taxon>
        <taxon>Gammaproteobacteria</taxon>
        <taxon>Enterobacterales</taxon>
        <taxon>Enterobacteriaceae</taxon>
        <taxon>Escherichia</taxon>
    </lineage>
</organism>